<keyword id="KW-0413">Isomerase</keyword>
<keyword id="KW-1185">Reference proteome</keyword>
<keyword id="KW-0819">tRNA processing</keyword>
<accession>Q03PY8</accession>
<feature type="chain" id="PRO_1000017097" description="tRNA pseudouridine synthase A">
    <location>
        <begin position="1"/>
        <end position="265"/>
    </location>
</feature>
<feature type="active site" description="Nucleophile" evidence="1">
    <location>
        <position position="55"/>
    </location>
</feature>
<feature type="binding site" evidence="1">
    <location>
        <position position="113"/>
    </location>
    <ligand>
        <name>substrate</name>
    </ligand>
</feature>
<protein>
    <recommendedName>
        <fullName evidence="1">tRNA pseudouridine synthase A</fullName>
        <ecNumber evidence="1">5.4.99.12</ecNumber>
    </recommendedName>
    <alternativeName>
        <fullName evidence="1">tRNA pseudouridine(38-40) synthase</fullName>
    </alternativeName>
    <alternativeName>
        <fullName evidence="1">tRNA pseudouridylate synthase I</fullName>
    </alternativeName>
    <alternativeName>
        <fullName evidence="1">tRNA-uridine isomerase I</fullName>
    </alternativeName>
</protein>
<dbReference type="EC" id="5.4.99.12" evidence="1"/>
<dbReference type="EMBL" id="CP000416">
    <property type="protein sequence ID" value="ABJ64734.1"/>
    <property type="molecule type" value="Genomic_DNA"/>
</dbReference>
<dbReference type="RefSeq" id="WP_011668468.1">
    <property type="nucleotide sequence ID" value="NC_008497.1"/>
</dbReference>
<dbReference type="SMR" id="Q03PY8"/>
<dbReference type="STRING" id="387344.LVIS_1659"/>
<dbReference type="KEGG" id="lbr:LVIS_1659"/>
<dbReference type="eggNOG" id="COG0101">
    <property type="taxonomic scope" value="Bacteria"/>
</dbReference>
<dbReference type="HOGENOM" id="CLU_014673_0_1_9"/>
<dbReference type="Proteomes" id="UP000001652">
    <property type="component" value="Chromosome"/>
</dbReference>
<dbReference type="GO" id="GO:0003723">
    <property type="term" value="F:RNA binding"/>
    <property type="evidence" value="ECO:0007669"/>
    <property type="project" value="InterPro"/>
</dbReference>
<dbReference type="GO" id="GO:0160147">
    <property type="term" value="F:tRNA pseudouridine(38-40) synthase activity"/>
    <property type="evidence" value="ECO:0007669"/>
    <property type="project" value="UniProtKB-EC"/>
</dbReference>
<dbReference type="GO" id="GO:0031119">
    <property type="term" value="P:tRNA pseudouridine synthesis"/>
    <property type="evidence" value="ECO:0007669"/>
    <property type="project" value="UniProtKB-UniRule"/>
</dbReference>
<dbReference type="CDD" id="cd02570">
    <property type="entry name" value="PseudoU_synth_EcTruA"/>
    <property type="match status" value="1"/>
</dbReference>
<dbReference type="FunFam" id="3.30.70.580:FF:000001">
    <property type="entry name" value="tRNA pseudouridine synthase A"/>
    <property type="match status" value="1"/>
</dbReference>
<dbReference type="Gene3D" id="3.30.70.660">
    <property type="entry name" value="Pseudouridine synthase I, catalytic domain, C-terminal subdomain"/>
    <property type="match status" value="1"/>
</dbReference>
<dbReference type="Gene3D" id="3.30.70.580">
    <property type="entry name" value="Pseudouridine synthase I, catalytic domain, N-terminal subdomain"/>
    <property type="match status" value="1"/>
</dbReference>
<dbReference type="HAMAP" id="MF_00171">
    <property type="entry name" value="TruA"/>
    <property type="match status" value="1"/>
</dbReference>
<dbReference type="InterPro" id="IPR020103">
    <property type="entry name" value="PsdUridine_synth_cat_dom_sf"/>
</dbReference>
<dbReference type="InterPro" id="IPR001406">
    <property type="entry name" value="PsdUridine_synth_TruA"/>
</dbReference>
<dbReference type="InterPro" id="IPR020097">
    <property type="entry name" value="PsdUridine_synth_TruA_a/b_dom"/>
</dbReference>
<dbReference type="InterPro" id="IPR020095">
    <property type="entry name" value="PsdUridine_synth_TruA_C"/>
</dbReference>
<dbReference type="InterPro" id="IPR020094">
    <property type="entry name" value="TruA/RsuA/RluB/E/F_N"/>
</dbReference>
<dbReference type="NCBIfam" id="TIGR00071">
    <property type="entry name" value="hisT_truA"/>
    <property type="match status" value="1"/>
</dbReference>
<dbReference type="PANTHER" id="PTHR11142">
    <property type="entry name" value="PSEUDOURIDYLATE SYNTHASE"/>
    <property type="match status" value="1"/>
</dbReference>
<dbReference type="PANTHER" id="PTHR11142:SF0">
    <property type="entry name" value="TRNA PSEUDOURIDINE SYNTHASE-LIKE 1"/>
    <property type="match status" value="1"/>
</dbReference>
<dbReference type="Pfam" id="PF01416">
    <property type="entry name" value="PseudoU_synth_1"/>
    <property type="match status" value="2"/>
</dbReference>
<dbReference type="PIRSF" id="PIRSF001430">
    <property type="entry name" value="tRNA_psdUrid_synth"/>
    <property type="match status" value="1"/>
</dbReference>
<dbReference type="SUPFAM" id="SSF55120">
    <property type="entry name" value="Pseudouridine synthase"/>
    <property type="match status" value="1"/>
</dbReference>
<name>TRUA_LEVBA</name>
<organism>
    <name type="scientific">Levilactobacillus brevis (strain ATCC 367 / BCRC 12310 / CIP 105137 / JCM 1170 / LMG 11437 / NCIMB 947 / NCTC 947)</name>
    <name type="common">Lactobacillus brevis</name>
    <dbReference type="NCBI Taxonomy" id="387344"/>
    <lineage>
        <taxon>Bacteria</taxon>
        <taxon>Bacillati</taxon>
        <taxon>Bacillota</taxon>
        <taxon>Bacilli</taxon>
        <taxon>Lactobacillales</taxon>
        <taxon>Lactobacillaceae</taxon>
        <taxon>Levilactobacillus</taxon>
    </lineage>
</organism>
<proteinExistence type="inferred from homology"/>
<reference key="1">
    <citation type="journal article" date="2006" name="Proc. Natl. Acad. Sci. U.S.A.">
        <title>Comparative genomics of the lactic acid bacteria.</title>
        <authorList>
            <person name="Makarova K.S."/>
            <person name="Slesarev A."/>
            <person name="Wolf Y.I."/>
            <person name="Sorokin A."/>
            <person name="Mirkin B."/>
            <person name="Koonin E.V."/>
            <person name="Pavlov A."/>
            <person name="Pavlova N."/>
            <person name="Karamychev V."/>
            <person name="Polouchine N."/>
            <person name="Shakhova V."/>
            <person name="Grigoriev I."/>
            <person name="Lou Y."/>
            <person name="Rohksar D."/>
            <person name="Lucas S."/>
            <person name="Huang K."/>
            <person name="Goodstein D.M."/>
            <person name="Hawkins T."/>
            <person name="Plengvidhya V."/>
            <person name="Welker D."/>
            <person name="Hughes J."/>
            <person name="Goh Y."/>
            <person name="Benson A."/>
            <person name="Baldwin K."/>
            <person name="Lee J.-H."/>
            <person name="Diaz-Muniz I."/>
            <person name="Dosti B."/>
            <person name="Smeianov V."/>
            <person name="Wechter W."/>
            <person name="Barabote R."/>
            <person name="Lorca G."/>
            <person name="Altermann E."/>
            <person name="Barrangou R."/>
            <person name="Ganesan B."/>
            <person name="Xie Y."/>
            <person name="Rawsthorne H."/>
            <person name="Tamir D."/>
            <person name="Parker C."/>
            <person name="Breidt F."/>
            <person name="Broadbent J.R."/>
            <person name="Hutkins R."/>
            <person name="O'Sullivan D."/>
            <person name="Steele J."/>
            <person name="Unlu G."/>
            <person name="Saier M.H. Jr."/>
            <person name="Klaenhammer T."/>
            <person name="Richardson P."/>
            <person name="Kozyavkin S."/>
            <person name="Weimer B.C."/>
            <person name="Mills D.A."/>
        </authorList>
    </citation>
    <scope>NUCLEOTIDE SEQUENCE [LARGE SCALE GENOMIC DNA]</scope>
    <source>
        <strain>ATCC 367 / BCRC 12310 / CIP 105137 / JCM 1170 / LMG 11437 / NCIMB 947 / NCTC 947</strain>
    </source>
</reference>
<sequence>MQRYKVTLMYDGTNFAGFQRQPNKRTVESTLTDVVNKMAKQPDPAIVIYGSGRTDAGVHALAQVVHFDFPFLIPADNMRKGLNSMLPMDMEVLKVEEVAPTFHARYDVSGKQYQYRMDMGEFRNPFKRNYTGHWKFPVDLAKINVALADLVGEHDYTSFVASGAQTRTFVRTIYEATCHIDEANHELVFEFYGNGFMYNQVRIMVGVLVEIGSGTRPVHDVLRLYEVKDRKQARRTVPAAGLYLKHVYYQGEDPQHPTKLPQHQR</sequence>
<gene>
    <name evidence="1" type="primary">truA</name>
    <name type="ordered locus">LVIS_1659</name>
</gene>
<comment type="function">
    <text evidence="1">Formation of pseudouridine at positions 38, 39 and 40 in the anticodon stem and loop of transfer RNAs.</text>
</comment>
<comment type="catalytic activity">
    <reaction evidence="1">
        <text>uridine(38/39/40) in tRNA = pseudouridine(38/39/40) in tRNA</text>
        <dbReference type="Rhea" id="RHEA:22376"/>
        <dbReference type="Rhea" id="RHEA-COMP:10085"/>
        <dbReference type="Rhea" id="RHEA-COMP:10087"/>
        <dbReference type="ChEBI" id="CHEBI:65314"/>
        <dbReference type="ChEBI" id="CHEBI:65315"/>
        <dbReference type="EC" id="5.4.99.12"/>
    </reaction>
</comment>
<comment type="subunit">
    <text evidence="1">Homodimer.</text>
</comment>
<comment type="similarity">
    <text evidence="1">Belongs to the tRNA pseudouridine synthase TruA family.</text>
</comment>
<evidence type="ECO:0000255" key="1">
    <source>
        <dbReference type="HAMAP-Rule" id="MF_00171"/>
    </source>
</evidence>